<reference key="1">
    <citation type="submission" date="2006-03" db="EMBL/GenBank/DDBJ databases">
        <title>Complete sequence of chromosome of Nitrobacter hamburgensis X14.</title>
        <authorList>
            <consortium name="US DOE Joint Genome Institute"/>
            <person name="Copeland A."/>
            <person name="Lucas S."/>
            <person name="Lapidus A."/>
            <person name="Barry K."/>
            <person name="Detter J.C."/>
            <person name="Glavina del Rio T."/>
            <person name="Hammon N."/>
            <person name="Israni S."/>
            <person name="Dalin E."/>
            <person name="Tice H."/>
            <person name="Pitluck S."/>
            <person name="Chain P."/>
            <person name="Malfatti S."/>
            <person name="Shin M."/>
            <person name="Vergez L."/>
            <person name="Schmutz J."/>
            <person name="Larimer F."/>
            <person name="Land M."/>
            <person name="Hauser L."/>
            <person name="Kyrpides N."/>
            <person name="Ivanova N."/>
            <person name="Ward B."/>
            <person name="Arp D."/>
            <person name="Klotz M."/>
            <person name="Stein L."/>
            <person name="O'Mullan G."/>
            <person name="Starkenburg S."/>
            <person name="Sayavedra L."/>
            <person name="Poret-Peterson A.T."/>
            <person name="Gentry M.E."/>
            <person name="Bruce D."/>
            <person name="Richardson P."/>
        </authorList>
    </citation>
    <scope>NUCLEOTIDE SEQUENCE [LARGE SCALE GENOMIC DNA]</scope>
    <source>
        <strain>DSM 10229 / NCIMB 13809 / X14</strain>
    </source>
</reference>
<evidence type="ECO:0000255" key="1">
    <source>
        <dbReference type="HAMAP-Rule" id="MF_01393"/>
    </source>
</evidence>
<name>ATP6_NITHX</name>
<organism>
    <name type="scientific">Nitrobacter hamburgensis (strain DSM 10229 / NCIMB 13809 / X14)</name>
    <dbReference type="NCBI Taxonomy" id="323097"/>
    <lineage>
        <taxon>Bacteria</taxon>
        <taxon>Pseudomonadati</taxon>
        <taxon>Pseudomonadota</taxon>
        <taxon>Alphaproteobacteria</taxon>
        <taxon>Hyphomicrobiales</taxon>
        <taxon>Nitrobacteraceae</taxon>
        <taxon>Nitrobacter</taxon>
    </lineage>
</organism>
<gene>
    <name evidence="1" type="primary">atpB</name>
    <name type="ordered locus">Nham_0269</name>
</gene>
<protein>
    <recommendedName>
        <fullName evidence="1">ATP synthase subunit a</fullName>
    </recommendedName>
    <alternativeName>
        <fullName evidence="1">ATP synthase F0 sector subunit a</fullName>
    </alternativeName>
    <alternativeName>
        <fullName evidence="1">F-ATPase subunit 6</fullName>
    </alternativeName>
</protein>
<sequence>MMDPIHQFNIETIFTIGHIGGQEIAFTNSSAYMLVAVVLTSLLMLATGRKLVPGRMQSIAEISYEFVADTIHTTAGKDGMKFFPFVFTIFMLVTVSNLVGIVPYTFTISSHIIVTAALAFLVFFTVLIYGFYKNGLRFFKLFVPSGIPIVILPLVVAIEVISFLSRPVSHSVRLFANMLAGHITLKVFASFVTMLGAMGIVGVFGAVLPLALVVALTALELLVAFLQAYVFTILTCIYINDAIHPGH</sequence>
<proteinExistence type="inferred from homology"/>
<comment type="function">
    <text evidence="1">Key component of the proton channel; it plays a direct role in the translocation of protons across the membrane.</text>
</comment>
<comment type="subunit">
    <text evidence="1">F-type ATPases have 2 components, CF(1) - the catalytic core - and CF(0) - the membrane proton channel. CF(1) has five subunits: alpha(3), beta(3), gamma(1), delta(1), epsilon(1). CF(0) has three main subunits: a(1), b(2) and c(9-12). The alpha and beta chains form an alternating ring which encloses part of the gamma chain. CF(1) is attached to CF(0) by a central stalk formed by the gamma and epsilon chains, while a peripheral stalk is formed by the delta and b chains.</text>
</comment>
<comment type="subcellular location">
    <subcellularLocation>
        <location evidence="1">Cell inner membrane</location>
        <topology evidence="1">Multi-pass membrane protein</topology>
    </subcellularLocation>
</comment>
<comment type="similarity">
    <text evidence="1">Belongs to the ATPase A chain family.</text>
</comment>
<dbReference type="EMBL" id="CP000319">
    <property type="protein sequence ID" value="ABE61169.1"/>
    <property type="molecule type" value="Genomic_DNA"/>
</dbReference>
<dbReference type="RefSeq" id="WP_011508873.1">
    <property type="nucleotide sequence ID" value="NC_007964.1"/>
</dbReference>
<dbReference type="SMR" id="Q1QRH8"/>
<dbReference type="STRING" id="323097.Nham_0269"/>
<dbReference type="KEGG" id="nha:Nham_0269"/>
<dbReference type="eggNOG" id="COG0356">
    <property type="taxonomic scope" value="Bacteria"/>
</dbReference>
<dbReference type="HOGENOM" id="CLU_041018_0_2_5"/>
<dbReference type="OrthoDB" id="9809130at2"/>
<dbReference type="Proteomes" id="UP000001953">
    <property type="component" value="Chromosome"/>
</dbReference>
<dbReference type="GO" id="GO:0005886">
    <property type="term" value="C:plasma membrane"/>
    <property type="evidence" value="ECO:0007669"/>
    <property type="project" value="UniProtKB-SubCell"/>
</dbReference>
<dbReference type="GO" id="GO:0045259">
    <property type="term" value="C:proton-transporting ATP synthase complex"/>
    <property type="evidence" value="ECO:0007669"/>
    <property type="project" value="UniProtKB-KW"/>
</dbReference>
<dbReference type="GO" id="GO:0046933">
    <property type="term" value="F:proton-transporting ATP synthase activity, rotational mechanism"/>
    <property type="evidence" value="ECO:0007669"/>
    <property type="project" value="UniProtKB-UniRule"/>
</dbReference>
<dbReference type="CDD" id="cd00310">
    <property type="entry name" value="ATP-synt_Fo_a_6"/>
    <property type="match status" value="1"/>
</dbReference>
<dbReference type="FunFam" id="1.20.120.220:FF:000003">
    <property type="entry name" value="ATP synthase subunit a"/>
    <property type="match status" value="1"/>
</dbReference>
<dbReference type="Gene3D" id="1.20.120.220">
    <property type="entry name" value="ATP synthase, F0 complex, subunit A"/>
    <property type="match status" value="1"/>
</dbReference>
<dbReference type="HAMAP" id="MF_01393">
    <property type="entry name" value="ATP_synth_a_bact"/>
    <property type="match status" value="1"/>
</dbReference>
<dbReference type="InterPro" id="IPR000568">
    <property type="entry name" value="ATP_synth_F0_asu"/>
</dbReference>
<dbReference type="InterPro" id="IPR023011">
    <property type="entry name" value="ATP_synth_F0_asu_AS"/>
</dbReference>
<dbReference type="InterPro" id="IPR045083">
    <property type="entry name" value="ATP_synth_F0_asu_bact/mt"/>
</dbReference>
<dbReference type="InterPro" id="IPR035908">
    <property type="entry name" value="F0_ATP_A_sf"/>
</dbReference>
<dbReference type="NCBIfam" id="TIGR01131">
    <property type="entry name" value="ATP_synt_6_or_A"/>
    <property type="match status" value="1"/>
</dbReference>
<dbReference type="NCBIfam" id="NF004482">
    <property type="entry name" value="PRK05815.2-4"/>
    <property type="match status" value="1"/>
</dbReference>
<dbReference type="PANTHER" id="PTHR11410">
    <property type="entry name" value="ATP SYNTHASE SUBUNIT A"/>
    <property type="match status" value="1"/>
</dbReference>
<dbReference type="PANTHER" id="PTHR11410:SF0">
    <property type="entry name" value="ATP SYNTHASE SUBUNIT A"/>
    <property type="match status" value="1"/>
</dbReference>
<dbReference type="Pfam" id="PF00119">
    <property type="entry name" value="ATP-synt_A"/>
    <property type="match status" value="1"/>
</dbReference>
<dbReference type="PRINTS" id="PR00123">
    <property type="entry name" value="ATPASEA"/>
</dbReference>
<dbReference type="SUPFAM" id="SSF81336">
    <property type="entry name" value="F1F0 ATP synthase subunit A"/>
    <property type="match status" value="1"/>
</dbReference>
<dbReference type="PROSITE" id="PS00449">
    <property type="entry name" value="ATPASE_A"/>
    <property type="match status" value="1"/>
</dbReference>
<keyword id="KW-0066">ATP synthesis</keyword>
<keyword id="KW-0997">Cell inner membrane</keyword>
<keyword id="KW-1003">Cell membrane</keyword>
<keyword id="KW-0138">CF(0)</keyword>
<keyword id="KW-0375">Hydrogen ion transport</keyword>
<keyword id="KW-0406">Ion transport</keyword>
<keyword id="KW-0472">Membrane</keyword>
<keyword id="KW-1185">Reference proteome</keyword>
<keyword id="KW-0812">Transmembrane</keyword>
<keyword id="KW-1133">Transmembrane helix</keyword>
<keyword id="KW-0813">Transport</keyword>
<feature type="chain" id="PRO_0000362354" description="ATP synthase subunit a">
    <location>
        <begin position="1"/>
        <end position="247"/>
    </location>
</feature>
<feature type="transmembrane region" description="Helical" evidence="1">
    <location>
        <begin position="24"/>
        <end position="44"/>
    </location>
</feature>
<feature type="transmembrane region" description="Helical" evidence="1">
    <location>
        <begin position="82"/>
        <end position="102"/>
    </location>
</feature>
<feature type="transmembrane region" description="Helical" evidence="1">
    <location>
        <begin position="112"/>
        <end position="132"/>
    </location>
</feature>
<feature type="transmembrane region" description="Helical" evidence="1">
    <location>
        <begin position="141"/>
        <end position="161"/>
    </location>
</feature>
<feature type="transmembrane region" description="Helical" evidence="1">
    <location>
        <begin position="194"/>
        <end position="214"/>
    </location>
</feature>
<feature type="transmembrane region" description="Helical" evidence="1">
    <location>
        <begin position="219"/>
        <end position="239"/>
    </location>
</feature>
<accession>Q1QRH8</accession>